<keyword id="KW-0997">Cell inner membrane</keyword>
<keyword id="KW-1003">Cell membrane</keyword>
<keyword id="KW-0169">Cobalamin biosynthesis</keyword>
<keyword id="KW-0460">Magnesium</keyword>
<keyword id="KW-0472">Membrane</keyword>
<keyword id="KW-0808">Transferase</keyword>
<keyword id="KW-0812">Transmembrane</keyword>
<keyword id="KW-1133">Transmembrane helix</keyword>
<gene>
    <name evidence="1" type="primary">cobS</name>
    <name type="ordered locus">ECUMN_2328</name>
</gene>
<organism>
    <name type="scientific">Escherichia coli O17:K52:H18 (strain UMN026 / ExPEC)</name>
    <dbReference type="NCBI Taxonomy" id="585056"/>
    <lineage>
        <taxon>Bacteria</taxon>
        <taxon>Pseudomonadati</taxon>
        <taxon>Pseudomonadota</taxon>
        <taxon>Gammaproteobacteria</taxon>
        <taxon>Enterobacterales</taxon>
        <taxon>Enterobacteriaceae</taxon>
        <taxon>Escherichia</taxon>
    </lineage>
</organism>
<evidence type="ECO:0000255" key="1">
    <source>
        <dbReference type="HAMAP-Rule" id="MF_00719"/>
    </source>
</evidence>
<name>COBS_ECOLU</name>
<reference key="1">
    <citation type="journal article" date="2009" name="PLoS Genet.">
        <title>Organised genome dynamics in the Escherichia coli species results in highly diverse adaptive paths.</title>
        <authorList>
            <person name="Touchon M."/>
            <person name="Hoede C."/>
            <person name="Tenaillon O."/>
            <person name="Barbe V."/>
            <person name="Baeriswyl S."/>
            <person name="Bidet P."/>
            <person name="Bingen E."/>
            <person name="Bonacorsi S."/>
            <person name="Bouchier C."/>
            <person name="Bouvet O."/>
            <person name="Calteau A."/>
            <person name="Chiapello H."/>
            <person name="Clermont O."/>
            <person name="Cruveiller S."/>
            <person name="Danchin A."/>
            <person name="Diard M."/>
            <person name="Dossat C."/>
            <person name="Karoui M.E."/>
            <person name="Frapy E."/>
            <person name="Garry L."/>
            <person name="Ghigo J.M."/>
            <person name="Gilles A.M."/>
            <person name="Johnson J."/>
            <person name="Le Bouguenec C."/>
            <person name="Lescat M."/>
            <person name="Mangenot S."/>
            <person name="Martinez-Jehanne V."/>
            <person name="Matic I."/>
            <person name="Nassif X."/>
            <person name="Oztas S."/>
            <person name="Petit M.A."/>
            <person name="Pichon C."/>
            <person name="Rouy Z."/>
            <person name="Ruf C.S."/>
            <person name="Schneider D."/>
            <person name="Tourret J."/>
            <person name="Vacherie B."/>
            <person name="Vallenet D."/>
            <person name="Medigue C."/>
            <person name="Rocha E.P.C."/>
            <person name="Denamur E."/>
        </authorList>
    </citation>
    <scope>NUCLEOTIDE SEQUENCE [LARGE SCALE GENOMIC DNA]</scope>
    <source>
        <strain>UMN026 / ExPEC</strain>
    </source>
</reference>
<sequence length="247" mass="26412">MSKLFWAMLSFITRLPVPRRWSQGLDFEHYSRGIITFPLIGLLLGAISGLVFMALQAWFGVPLAALFSVLVLALMTGGFHLDGLADTCDGVFSARSRDRMLEIMRDSRLGTHGGLALIFVVLAKILVLSELALRGEPILASLAAACAVSRGTAALLMYRHRYAREEGLGNVFIGKIDGRQTCVTLGLAAIFAAVLLPGMHGVAAMVVTMVAIFILGQLLKRTLGGQTGDTLGAAIELGELVFLLALL</sequence>
<proteinExistence type="inferred from homology"/>
<accession>B7NC26</accession>
<comment type="function">
    <text evidence="1">Joins adenosylcobinamide-GDP and alpha-ribazole to generate adenosylcobalamin (Ado-cobalamin). Also synthesizes adenosylcobalamin 5'-phosphate from adenosylcobinamide-GDP and alpha-ribazole 5'-phosphate.</text>
</comment>
<comment type="catalytic activity">
    <reaction evidence="1">
        <text>alpha-ribazole + adenosylcob(III)inamide-GDP = adenosylcob(III)alamin + GMP + H(+)</text>
        <dbReference type="Rhea" id="RHEA:16049"/>
        <dbReference type="ChEBI" id="CHEBI:10329"/>
        <dbReference type="ChEBI" id="CHEBI:15378"/>
        <dbReference type="ChEBI" id="CHEBI:18408"/>
        <dbReference type="ChEBI" id="CHEBI:58115"/>
        <dbReference type="ChEBI" id="CHEBI:60487"/>
        <dbReference type="EC" id="2.7.8.26"/>
    </reaction>
</comment>
<comment type="catalytic activity">
    <reaction evidence="1">
        <text>alpha-ribazole 5'-phosphate + adenosylcob(III)inamide-GDP = adenosylcob(III)alamin 5'-phosphate + GMP + H(+)</text>
        <dbReference type="Rhea" id="RHEA:23560"/>
        <dbReference type="ChEBI" id="CHEBI:15378"/>
        <dbReference type="ChEBI" id="CHEBI:57918"/>
        <dbReference type="ChEBI" id="CHEBI:58115"/>
        <dbReference type="ChEBI" id="CHEBI:60487"/>
        <dbReference type="ChEBI" id="CHEBI:60493"/>
        <dbReference type="EC" id="2.7.8.26"/>
    </reaction>
</comment>
<comment type="cofactor">
    <cofactor evidence="1">
        <name>Mg(2+)</name>
        <dbReference type="ChEBI" id="CHEBI:18420"/>
    </cofactor>
</comment>
<comment type="pathway">
    <text evidence="1">Cofactor biosynthesis; adenosylcobalamin biosynthesis; adenosylcobalamin from cob(II)yrinate a,c-diamide: step 7/7.</text>
</comment>
<comment type="subcellular location">
    <subcellularLocation>
        <location evidence="1">Cell inner membrane</location>
        <topology evidence="1">Multi-pass membrane protein</topology>
    </subcellularLocation>
</comment>
<comment type="similarity">
    <text evidence="1">Belongs to the CobS family.</text>
</comment>
<dbReference type="EC" id="2.7.8.26" evidence="1"/>
<dbReference type="EMBL" id="CU928163">
    <property type="protein sequence ID" value="CAR13516.1"/>
    <property type="molecule type" value="Genomic_DNA"/>
</dbReference>
<dbReference type="RefSeq" id="WP_001308745.1">
    <property type="nucleotide sequence ID" value="NC_011751.1"/>
</dbReference>
<dbReference type="RefSeq" id="YP_002413044.1">
    <property type="nucleotide sequence ID" value="NC_011751.1"/>
</dbReference>
<dbReference type="STRING" id="585056.ECUMN_2328"/>
<dbReference type="KEGG" id="eum:ECUMN_2328"/>
<dbReference type="PATRIC" id="fig|585056.7.peg.2508"/>
<dbReference type="HOGENOM" id="CLU_057426_1_1_6"/>
<dbReference type="UniPathway" id="UPA00148">
    <property type="reaction ID" value="UER00238"/>
</dbReference>
<dbReference type="Proteomes" id="UP000007097">
    <property type="component" value="Chromosome"/>
</dbReference>
<dbReference type="GO" id="GO:0005886">
    <property type="term" value="C:plasma membrane"/>
    <property type="evidence" value="ECO:0007669"/>
    <property type="project" value="UniProtKB-SubCell"/>
</dbReference>
<dbReference type="GO" id="GO:0051073">
    <property type="term" value="F:adenosylcobinamide-GDP ribazoletransferase activity"/>
    <property type="evidence" value="ECO:0007669"/>
    <property type="project" value="UniProtKB-UniRule"/>
</dbReference>
<dbReference type="GO" id="GO:0008818">
    <property type="term" value="F:cobalamin 5'-phosphate synthase activity"/>
    <property type="evidence" value="ECO:0007669"/>
    <property type="project" value="UniProtKB-UniRule"/>
</dbReference>
<dbReference type="GO" id="GO:0009236">
    <property type="term" value="P:cobalamin biosynthetic process"/>
    <property type="evidence" value="ECO:0007669"/>
    <property type="project" value="UniProtKB-UniRule"/>
</dbReference>
<dbReference type="HAMAP" id="MF_00719">
    <property type="entry name" value="CobS"/>
    <property type="match status" value="1"/>
</dbReference>
<dbReference type="InterPro" id="IPR003805">
    <property type="entry name" value="CobS"/>
</dbReference>
<dbReference type="NCBIfam" id="TIGR00317">
    <property type="entry name" value="cobS"/>
    <property type="match status" value="1"/>
</dbReference>
<dbReference type="PANTHER" id="PTHR34148">
    <property type="entry name" value="ADENOSYLCOBINAMIDE-GDP RIBAZOLETRANSFERASE"/>
    <property type="match status" value="1"/>
</dbReference>
<dbReference type="PANTHER" id="PTHR34148:SF1">
    <property type="entry name" value="ADENOSYLCOBINAMIDE-GDP RIBAZOLETRANSFERASE"/>
    <property type="match status" value="1"/>
</dbReference>
<dbReference type="Pfam" id="PF02654">
    <property type="entry name" value="CobS"/>
    <property type="match status" value="1"/>
</dbReference>
<protein>
    <recommendedName>
        <fullName evidence="1">Adenosylcobinamide-GDP ribazoletransferase</fullName>
        <ecNumber evidence="1">2.7.8.26</ecNumber>
    </recommendedName>
    <alternativeName>
        <fullName evidence="1">Cobalamin synthase</fullName>
    </alternativeName>
    <alternativeName>
        <fullName evidence="1">Cobalamin-5'-phosphate synthase</fullName>
    </alternativeName>
</protein>
<feature type="chain" id="PRO_1000132579" description="Adenosylcobinamide-GDP ribazoletransferase">
    <location>
        <begin position="1"/>
        <end position="247"/>
    </location>
</feature>
<feature type="transmembrane region" description="Helical" evidence="1">
    <location>
        <begin position="34"/>
        <end position="54"/>
    </location>
</feature>
<feature type="transmembrane region" description="Helical" evidence="1">
    <location>
        <begin position="59"/>
        <end position="79"/>
    </location>
</feature>
<feature type="transmembrane region" description="Helical" evidence="1">
    <location>
        <begin position="113"/>
        <end position="133"/>
    </location>
</feature>
<feature type="transmembrane region" description="Helical" evidence="1">
    <location>
        <begin position="138"/>
        <end position="158"/>
    </location>
</feature>
<feature type="transmembrane region" description="Helical" evidence="1">
    <location>
        <begin position="194"/>
        <end position="214"/>
    </location>
</feature>